<protein>
    <recommendedName>
        <fullName evidence="1">Phosphate acyltransferase</fullName>
        <ecNumber evidence="1">2.3.1.274</ecNumber>
    </recommendedName>
    <alternativeName>
        <fullName evidence="1">Acyl-ACP phosphotransacylase</fullName>
    </alternativeName>
    <alternativeName>
        <fullName evidence="1">Acyl-[acyl-carrier-protein]--phosphate acyltransferase</fullName>
    </alternativeName>
    <alternativeName>
        <fullName evidence="1">Phosphate-acyl-ACP acyltransferase</fullName>
    </alternativeName>
</protein>
<dbReference type="EC" id="2.3.1.274" evidence="1"/>
<dbReference type="EMBL" id="CR925677">
    <property type="protein sequence ID" value="CAI28045.1"/>
    <property type="molecule type" value="Genomic_DNA"/>
</dbReference>
<dbReference type="SMR" id="Q5FFT4"/>
<dbReference type="KEGG" id="erg:ERGA_CDS_05930"/>
<dbReference type="HOGENOM" id="CLU_039379_1_0_5"/>
<dbReference type="OrthoDB" id="9806408at2"/>
<dbReference type="UniPathway" id="UPA00085"/>
<dbReference type="Proteomes" id="UP000000533">
    <property type="component" value="Chromosome"/>
</dbReference>
<dbReference type="GO" id="GO:0005737">
    <property type="term" value="C:cytoplasm"/>
    <property type="evidence" value="ECO:0007669"/>
    <property type="project" value="UniProtKB-SubCell"/>
</dbReference>
<dbReference type="GO" id="GO:0043811">
    <property type="term" value="F:phosphate:acyl-[acyl carrier protein] acyltransferase activity"/>
    <property type="evidence" value="ECO:0007669"/>
    <property type="project" value="UniProtKB-UniRule"/>
</dbReference>
<dbReference type="GO" id="GO:0006633">
    <property type="term" value="P:fatty acid biosynthetic process"/>
    <property type="evidence" value="ECO:0007669"/>
    <property type="project" value="UniProtKB-UniRule"/>
</dbReference>
<dbReference type="GO" id="GO:0008654">
    <property type="term" value="P:phospholipid biosynthetic process"/>
    <property type="evidence" value="ECO:0007669"/>
    <property type="project" value="UniProtKB-KW"/>
</dbReference>
<dbReference type="Gene3D" id="3.40.718.10">
    <property type="entry name" value="Isopropylmalate Dehydrogenase"/>
    <property type="match status" value="1"/>
</dbReference>
<dbReference type="HAMAP" id="MF_00019">
    <property type="entry name" value="PlsX"/>
    <property type="match status" value="1"/>
</dbReference>
<dbReference type="InterPro" id="IPR003664">
    <property type="entry name" value="FA_synthesis"/>
</dbReference>
<dbReference type="InterPro" id="IPR012281">
    <property type="entry name" value="Phospholipid_synth_PlsX-like"/>
</dbReference>
<dbReference type="NCBIfam" id="TIGR00182">
    <property type="entry name" value="plsX"/>
    <property type="match status" value="1"/>
</dbReference>
<dbReference type="PANTHER" id="PTHR30100">
    <property type="entry name" value="FATTY ACID/PHOSPHOLIPID SYNTHESIS PROTEIN PLSX"/>
    <property type="match status" value="1"/>
</dbReference>
<dbReference type="PANTHER" id="PTHR30100:SF1">
    <property type="entry name" value="PHOSPHATE ACYLTRANSFERASE"/>
    <property type="match status" value="1"/>
</dbReference>
<dbReference type="Pfam" id="PF02504">
    <property type="entry name" value="FA_synthesis"/>
    <property type="match status" value="1"/>
</dbReference>
<dbReference type="PIRSF" id="PIRSF002465">
    <property type="entry name" value="Phsphlp_syn_PlsX"/>
    <property type="match status" value="1"/>
</dbReference>
<dbReference type="SUPFAM" id="SSF53659">
    <property type="entry name" value="Isocitrate/Isopropylmalate dehydrogenase-like"/>
    <property type="match status" value="1"/>
</dbReference>
<reference key="1">
    <citation type="journal article" date="2006" name="J. Bacteriol.">
        <title>Comparative genomic analysis of three strains of Ehrlichia ruminantium reveals an active process of genome size plasticity.</title>
        <authorList>
            <person name="Frutos R."/>
            <person name="Viari A."/>
            <person name="Ferraz C."/>
            <person name="Morgat A."/>
            <person name="Eychenie S."/>
            <person name="Kandassamy Y."/>
            <person name="Chantal I."/>
            <person name="Bensaid A."/>
            <person name="Coissac E."/>
            <person name="Vachiery N."/>
            <person name="Demaille J."/>
            <person name="Martinez D."/>
        </authorList>
    </citation>
    <scope>NUCLEOTIDE SEQUENCE [LARGE SCALE GENOMIC DNA]</scope>
    <source>
        <strain>Gardel</strain>
    </source>
</reference>
<comment type="function">
    <text evidence="1">Catalyzes the reversible formation of acyl-phosphate (acyl-PO(4)) from acyl-[acyl-carrier-protein] (acyl-ACP). This enzyme utilizes acyl-ACP as fatty acyl donor, but not acyl-CoA.</text>
</comment>
<comment type="catalytic activity">
    <reaction evidence="1">
        <text>a fatty acyl-[ACP] + phosphate = an acyl phosphate + holo-[ACP]</text>
        <dbReference type="Rhea" id="RHEA:42292"/>
        <dbReference type="Rhea" id="RHEA-COMP:9685"/>
        <dbReference type="Rhea" id="RHEA-COMP:14125"/>
        <dbReference type="ChEBI" id="CHEBI:43474"/>
        <dbReference type="ChEBI" id="CHEBI:59918"/>
        <dbReference type="ChEBI" id="CHEBI:64479"/>
        <dbReference type="ChEBI" id="CHEBI:138651"/>
        <dbReference type="EC" id="2.3.1.274"/>
    </reaction>
</comment>
<comment type="pathway">
    <text evidence="1">Lipid metabolism; phospholipid metabolism.</text>
</comment>
<comment type="subunit">
    <text evidence="1">Homodimer. Probably interacts with PlsY.</text>
</comment>
<comment type="subcellular location">
    <subcellularLocation>
        <location evidence="1">Cytoplasm</location>
    </subcellularLocation>
    <text evidence="1">Associated with the membrane possibly through PlsY.</text>
</comment>
<comment type="similarity">
    <text evidence="1">Belongs to the PlsX family.</text>
</comment>
<keyword id="KW-0963">Cytoplasm</keyword>
<keyword id="KW-0444">Lipid biosynthesis</keyword>
<keyword id="KW-0443">Lipid metabolism</keyword>
<keyword id="KW-0594">Phospholipid biosynthesis</keyword>
<keyword id="KW-1208">Phospholipid metabolism</keyword>
<keyword id="KW-0808">Transferase</keyword>
<gene>
    <name evidence="1" type="primary">plsX</name>
    <name type="ordered locus">ERGA_CDS_05930</name>
</gene>
<sequence>MGNIQMSTISIAVDAMGGDFAPEAVVGGLNFALMNLLVDHNISFNIYGKEDCVLPVLDKYKTVRDNSVFINTSDVVLANDKPSFALRKRKSSSMWCAIDSIKTGTSSGVVSCGNTGALMAISRFVLGTLPNIDRPAICTKVPSKFQDFVLLDLGANIECSANSLFQFAIMGGAFAKAVLNIPNPKVALLNVGQEEIKGTGVIREAFSLLKEVEGKINFCGYVEPKDMVDGKVDVVVTDGFCGNVVLKVSESIASTIASIFKESISESIVAKFAGLLLKPRLIKNFSKFNPKLHNGAMFLGLNGVVVKSHGNSDELAFANAVKVVVNAVIHDINAKIVHELN</sequence>
<accession>Q5FFT4</accession>
<feature type="chain" id="PRO_1000001759" description="Phosphate acyltransferase">
    <location>
        <begin position="1"/>
        <end position="341"/>
    </location>
</feature>
<organism>
    <name type="scientific">Ehrlichia ruminantium (strain Gardel)</name>
    <dbReference type="NCBI Taxonomy" id="302409"/>
    <lineage>
        <taxon>Bacteria</taxon>
        <taxon>Pseudomonadati</taxon>
        <taxon>Pseudomonadota</taxon>
        <taxon>Alphaproteobacteria</taxon>
        <taxon>Rickettsiales</taxon>
        <taxon>Anaplasmataceae</taxon>
        <taxon>Ehrlichia</taxon>
    </lineage>
</organism>
<proteinExistence type="inferred from homology"/>
<evidence type="ECO:0000255" key="1">
    <source>
        <dbReference type="HAMAP-Rule" id="MF_00019"/>
    </source>
</evidence>
<name>PLSX_EHRRG</name>